<feature type="chain" id="PRO_1000135772" description="Small ribosomal subunit protein bS20">
    <location>
        <begin position="1"/>
        <end position="85"/>
    </location>
</feature>
<feature type="region of interest" description="Disordered" evidence="2">
    <location>
        <begin position="1"/>
        <end position="25"/>
    </location>
</feature>
<organism>
    <name type="scientific">Bacillus cereus (strain 03BB102)</name>
    <dbReference type="NCBI Taxonomy" id="572264"/>
    <lineage>
        <taxon>Bacteria</taxon>
        <taxon>Bacillati</taxon>
        <taxon>Bacillota</taxon>
        <taxon>Bacilli</taxon>
        <taxon>Bacillales</taxon>
        <taxon>Bacillaceae</taxon>
        <taxon>Bacillus</taxon>
        <taxon>Bacillus cereus group</taxon>
    </lineage>
</organism>
<gene>
    <name evidence="1" type="primary">rpsT</name>
    <name type="ordered locus">BCA_4433</name>
</gene>
<dbReference type="EMBL" id="CP001407">
    <property type="protein sequence ID" value="ACO31116.1"/>
    <property type="molecule type" value="Genomic_DNA"/>
</dbReference>
<dbReference type="RefSeq" id="WP_001274011.1">
    <property type="nucleotide sequence ID" value="NZ_CP009318.1"/>
</dbReference>
<dbReference type="SMR" id="C1ESL6"/>
<dbReference type="GeneID" id="93006778"/>
<dbReference type="KEGG" id="bcx:BCA_4433"/>
<dbReference type="PATRIC" id="fig|572264.18.peg.4381"/>
<dbReference type="Proteomes" id="UP000002210">
    <property type="component" value="Chromosome"/>
</dbReference>
<dbReference type="GO" id="GO:0005829">
    <property type="term" value="C:cytosol"/>
    <property type="evidence" value="ECO:0007669"/>
    <property type="project" value="TreeGrafter"/>
</dbReference>
<dbReference type="GO" id="GO:0015935">
    <property type="term" value="C:small ribosomal subunit"/>
    <property type="evidence" value="ECO:0007669"/>
    <property type="project" value="TreeGrafter"/>
</dbReference>
<dbReference type="GO" id="GO:0070181">
    <property type="term" value="F:small ribosomal subunit rRNA binding"/>
    <property type="evidence" value="ECO:0007669"/>
    <property type="project" value="TreeGrafter"/>
</dbReference>
<dbReference type="GO" id="GO:0003735">
    <property type="term" value="F:structural constituent of ribosome"/>
    <property type="evidence" value="ECO:0007669"/>
    <property type="project" value="InterPro"/>
</dbReference>
<dbReference type="GO" id="GO:0006412">
    <property type="term" value="P:translation"/>
    <property type="evidence" value="ECO:0007669"/>
    <property type="project" value="UniProtKB-UniRule"/>
</dbReference>
<dbReference type="FunFam" id="1.20.58.110:FF:000001">
    <property type="entry name" value="30S ribosomal protein S20"/>
    <property type="match status" value="1"/>
</dbReference>
<dbReference type="Gene3D" id="1.20.58.110">
    <property type="entry name" value="Ribosomal protein S20"/>
    <property type="match status" value="1"/>
</dbReference>
<dbReference type="HAMAP" id="MF_00500">
    <property type="entry name" value="Ribosomal_bS20"/>
    <property type="match status" value="1"/>
</dbReference>
<dbReference type="InterPro" id="IPR002583">
    <property type="entry name" value="Ribosomal_bS20"/>
</dbReference>
<dbReference type="InterPro" id="IPR036510">
    <property type="entry name" value="Ribosomal_bS20_sf"/>
</dbReference>
<dbReference type="NCBIfam" id="TIGR00029">
    <property type="entry name" value="S20"/>
    <property type="match status" value="1"/>
</dbReference>
<dbReference type="PANTHER" id="PTHR33398">
    <property type="entry name" value="30S RIBOSOMAL PROTEIN S20"/>
    <property type="match status" value="1"/>
</dbReference>
<dbReference type="PANTHER" id="PTHR33398:SF1">
    <property type="entry name" value="SMALL RIBOSOMAL SUBUNIT PROTEIN BS20C"/>
    <property type="match status" value="1"/>
</dbReference>
<dbReference type="Pfam" id="PF01649">
    <property type="entry name" value="Ribosomal_S20p"/>
    <property type="match status" value="1"/>
</dbReference>
<dbReference type="SUPFAM" id="SSF46992">
    <property type="entry name" value="Ribosomal protein S20"/>
    <property type="match status" value="1"/>
</dbReference>
<name>RS20_BACC3</name>
<sequence length="85" mass="9342">MANIKSAIKRAKLSEERRAHNASIKSDMRSAVKTVEALVTNNDLENAKEAFKTASKKLDKAARKGLIHQNAAARQKSRLAKQVNA</sequence>
<keyword id="KW-0687">Ribonucleoprotein</keyword>
<keyword id="KW-0689">Ribosomal protein</keyword>
<keyword id="KW-0694">RNA-binding</keyword>
<keyword id="KW-0699">rRNA-binding</keyword>
<protein>
    <recommendedName>
        <fullName evidence="1">Small ribosomal subunit protein bS20</fullName>
    </recommendedName>
    <alternativeName>
        <fullName evidence="3">30S ribosomal protein S20</fullName>
    </alternativeName>
</protein>
<proteinExistence type="inferred from homology"/>
<evidence type="ECO:0000255" key="1">
    <source>
        <dbReference type="HAMAP-Rule" id="MF_00500"/>
    </source>
</evidence>
<evidence type="ECO:0000256" key="2">
    <source>
        <dbReference type="SAM" id="MobiDB-lite"/>
    </source>
</evidence>
<evidence type="ECO:0000305" key="3"/>
<reference key="1">
    <citation type="submission" date="2009-02" db="EMBL/GenBank/DDBJ databases">
        <title>Genome sequence of Bacillus cereus 03BB102.</title>
        <authorList>
            <person name="Dodson R.J."/>
            <person name="Jackson P."/>
            <person name="Munk A.C."/>
            <person name="Brettin T."/>
            <person name="Bruce D."/>
            <person name="Detter C."/>
            <person name="Tapia R."/>
            <person name="Han C."/>
            <person name="Sutton G."/>
            <person name="Sims D."/>
        </authorList>
    </citation>
    <scope>NUCLEOTIDE SEQUENCE [LARGE SCALE GENOMIC DNA]</scope>
    <source>
        <strain>03BB102</strain>
    </source>
</reference>
<comment type="function">
    <text evidence="1">Binds directly to 16S ribosomal RNA.</text>
</comment>
<comment type="similarity">
    <text evidence="1">Belongs to the bacterial ribosomal protein bS20 family.</text>
</comment>
<accession>C1ESL6</accession>